<name>TYY1_MOUSE</name>
<accession>Q00899</accession>
<protein>
    <recommendedName>
        <fullName>Transcriptional repressor protein YY1</fullName>
    </recommendedName>
    <alternativeName>
        <fullName>Delta transcription factor</fullName>
    </alternativeName>
    <alternativeName>
        <fullName>NF-E1</fullName>
    </alternativeName>
    <alternativeName>
        <fullName>UCR-motif DNA-binding protein</fullName>
    </alternativeName>
    <alternativeName>
        <fullName>Yin and yang 1</fullName>
        <shortName>YY-1</shortName>
    </alternativeName>
</protein>
<dbReference type="EMBL" id="M73963">
    <property type="protein sequence ID" value="AAA40522.1"/>
    <property type="molecule type" value="mRNA"/>
</dbReference>
<dbReference type="EMBL" id="L13968">
    <property type="protein sequence ID" value="AAA40477.1"/>
    <property type="molecule type" value="Genomic_DNA"/>
</dbReference>
<dbReference type="EMBL" id="L13969">
    <property type="protein sequence ID" value="AAA40477.1"/>
    <property type="status" value="JOINED"/>
    <property type="molecule type" value="Genomic_DNA"/>
</dbReference>
<dbReference type="EMBL" id="L13965">
    <property type="protein sequence ID" value="AAA40477.1"/>
    <property type="status" value="JOINED"/>
    <property type="molecule type" value="Genomic_DNA"/>
</dbReference>
<dbReference type="EMBL" id="L13966">
    <property type="protein sequence ID" value="AAA40477.1"/>
    <property type="status" value="JOINED"/>
    <property type="molecule type" value="Genomic_DNA"/>
</dbReference>
<dbReference type="EMBL" id="L13967">
    <property type="protein sequence ID" value="AAA40477.1"/>
    <property type="status" value="JOINED"/>
    <property type="molecule type" value="Genomic_DNA"/>
</dbReference>
<dbReference type="EMBL" id="M74590">
    <property type="protein sequence ID" value="AAA37521.1"/>
    <property type="molecule type" value="mRNA"/>
</dbReference>
<dbReference type="EMBL" id="BC055899">
    <property type="protein sequence ID" value="AAH55899.1"/>
    <property type="molecule type" value="mRNA"/>
</dbReference>
<dbReference type="CCDS" id="CCDS26163.1"/>
<dbReference type="PIR" id="A48273">
    <property type="entry name" value="A48273"/>
</dbReference>
<dbReference type="RefSeq" id="NP_033563.2">
    <property type="nucleotide sequence ID" value="NM_009537.3"/>
</dbReference>
<dbReference type="SMR" id="Q00899"/>
<dbReference type="BioGRID" id="204624">
    <property type="interactions" value="21"/>
</dbReference>
<dbReference type="ComplexPortal" id="CPX-878">
    <property type="entry name" value="INO80 chromatin remodeling complex"/>
</dbReference>
<dbReference type="CORUM" id="Q00899"/>
<dbReference type="DIP" id="DIP-59285N"/>
<dbReference type="FunCoup" id="Q00899">
    <property type="interactions" value="4562"/>
</dbReference>
<dbReference type="IntAct" id="Q00899">
    <property type="interactions" value="12"/>
</dbReference>
<dbReference type="MINT" id="Q00899"/>
<dbReference type="STRING" id="10090.ENSMUSP00000021692"/>
<dbReference type="iPTMnet" id="Q00899"/>
<dbReference type="PhosphoSitePlus" id="Q00899"/>
<dbReference type="SwissPalm" id="Q00899"/>
<dbReference type="jPOST" id="Q00899"/>
<dbReference type="PaxDb" id="10090-ENSMUSP00000021692"/>
<dbReference type="PeptideAtlas" id="Q00899"/>
<dbReference type="ProteomicsDB" id="298052"/>
<dbReference type="Pumba" id="Q00899"/>
<dbReference type="Antibodypedia" id="9">
    <property type="antibodies" value="612 antibodies from 43 providers"/>
</dbReference>
<dbReference type="DNASU" id="22632"/>
<dbReference type="Ensembl" id="ENSMUST00000021692.9">
    <property type="protein sequence ID" value="ENSMUSP00000021692.8"/>
    <property type="gene ID" value="ENSMUSG00000021264.13"/>
</dbReference>
<dbReference type="GeneID" id="22632"/>
<dbReference type="KEGG" id="mmu:22632"/>
<dbReference type="UCSC" id="uc007pac.1">
    <property type="organism name" value="mouse"/>
</dbReference>
<dbReference type="AGR" id="MGI:99150"/>
<dbReference type="CTD" id="7528"/>
<dbReference type="MGI" id="MGI:99150">
    <property type="gene designation" value="Yy1"/>
</dbReference>
<dbReference type="VEuPathDB" id="HostDB:ENSMUSG00000021264"/>
<dbReference type="eggNOG" id="KOG1721">
    <property type="taxonomic scope" value="Eukaryota"/>
</dbReference>
<dbReference type="GeneTree" id="ENSGT00940000154763"/>
<dbReference type="HOGENOM" id="CLU_002678_42_2_1"/>
<dbReference type="InParanoid" id="Q00899"/>
<dbReference type="OMA" id="DAGGRKW"/>
<dbReference type="OrthoDB" id="10264072at2759"/>
<dbReference type="PhylomeDB" id="Q00899"/>
<dbReference type="TreeFam" id="TF106493"/>
<dbReference type="Reactome" id="R-MMU-5689603">
    <property type="pathway name" value="UCH proteinases"/>
</dbReference>
<dbReference type="Reactome" id="R-MMU-5696394">
    <property type="pathway name" value="DNA Damage Recognition in GG-NER"/>
</dbReference>
<dbReference type="BioGRID-ORCS" id="22632">
    <property type="hits" value="19 hits in 118 CRISPR screens"/>
</dbReference>
<dbReference type="ChiTaRS" id="Yy1">
    <property type="organism name" value="mouse"/>
</dbReference>
<dbReference type="PRO" id="PR:Q00899"/>
<dbReference type="Proteomes" id="UP000000589">
    <property type="component" value="Chromosome 12"/>
</dbReference>
<dbReference type="RNAct" id="Q00899">
    <property type="molecule type" value="protein"/>
</dbReference>
<dbReference type="Bgee" id="ENSMUSG00000021264">
    <property type="expression patterns" value="Expressed in indifferent gonad and 263 other cell types or tissues"/>
</dbReference>
<dbReference type="GO" id="GO:0000785">
    <property type="term" value="C:chromatin"/>
    <property type="evidence" value="ECO:0000314"/>
    <property type="project" value="BHF-UCL"/>
</dbReference>
<dbReference type="GO" id="GO:0005677">
    <property type="term" value="C:chromatin silencing complex"/>
    <property type="evidence" value="ECO:0000314"/>
    <property type="project" value="MGI"/>
</dbReference>
<dbReference type="GO" id="GO:0005737">
    <property type="term" value="C:cytoplasm"/>
    <property type="evidence" value="ECO:0007669"/>
    <property type="project" value="UniProtKB-SubCell"/>
</dbReference>
<dbReference type="GO" id="GO:0031011">
    <property type="term" value="C:Ino80 complex"/>
    <property type="evidence" value="ECO:0000266"/>
    <property type="project" value="ComplexPortal"/>
</dbReference>
<dbReference type="GO" id="GO:0016363">
    <property type="term" value="C:nuclear matrix"/>
    <property type="evidence" value="ECO:0007669"/>
    <property type="project" value="UniProtKB-SubCell"/>
</dbReference>
<dbReference type="GO" id="GO:0005654">
    <property type="term" value="C:nucleoplasm"/>
    <property type="evidence" value="ECO:0000304"/>
    <property type="project" value="Reactome"/>
</dbReference>
<dbReference type="GO" id="GO:0005634">
    <property type="term" value="C:nucleus"/>
    <property type="evidence" value="ECO:0000314"/>
    <property type="project" value="MGI"/>
</dbReference>
<dbReference type="GO" id="GO:0031519">
    <property type="term" value="C:PcG protein complex"/>
    <property type="evidence" value="ECO:0000314"/>
    <property type="project" value="MGI"/>
</dbReference>
<dbReference type="GO" id="GO:0005667">
    <property type="term" value="C:transcription regulator complex"/>
    <property type="evidence" value="ECO:0000314"/>
    <property type="project" value="MGI"/>
</dbReference>
<dbReference type="GO" id="GO:0003682">
    <property type="term" value="F:chromatin binding"/>
    <property type="evidence" value="ECO:0000314"/>
    <property type="project" value="MGI"/>
</dbReference>
<dbReference type="GO" id="GO:0003677">
    <property type="term" value="F:DNA binding"/>
    <property type="evidence" value="ECO:0000314"/>
    <property type="project" value="MGI"/>
</dbReference>
<dbReference type="GO" id="GO:0001228">
    <property type="term" value="F:DNA-binding transcription activator activity, RNA polymerase II-specific"/>
    <property type="evidence" value="ECO:0007669"/>
    <property type="project" value="Ensembl"/>
</dbReference>
<dbReference type="GO" id="GO:0003700">
    <property type="term" value="F:DNA-binding transcription factor activity"/>
    <property type="evidence" value="ECO:0000314"/>
    <property type="project" value="MGI"/>
</dbReference>
<dbReference type="GO" id="GO:0140297">
    <property type="term" value="F:DNA-binding transcription factor binding"/>
    <property type="evidence" value="ECO:0007669"/>
    <property type="project" value="Ensembl"/>
</dbReference>
<dbReference type="GO" id="GO:0001227">
    <property type="term" value="F:DNA-binding transcription repressor activity, RNA polymerase II-specific"/>
    <property type="evidence" value="ECO:0000314"/>
    <property type="project" value="BHF-UCL"/>
</dbReference>
<dbReference type="GO" id="GO:0000400">
    <property type="term" value="F:four-way junction DNA binding"/>
    <property type="evidence" value="ECO:0007669"/>
    <property type="project" value="Ensembl"/>
</dbReference>
<dbReference type="GO" id="GO:0003723">
    <property type="term" value="F:RNA binding"/>
    <property type="evidence" value="ECO:0000266"/>
    <property type="project" value="MGI"/>
</dbReference>
<dbReference type="GO" id="GO:0000978">
    <property type="term" value="F:RNA polymerase II cis-regulatory region sequence-specific DNA binding"/>
    <property type="evidence" value="ECO:0000314"/>
    <property type="project" value="BHF-UCL"/>
</dbReference>
<dbReference type="GO" id="GO:0043565">
    <property type="term" value="F:sequence-specific DNA binding"/>
    <property type="evidence" value="ECO:0000314"/>
    <property type="project" value="MGI"/>
</dbReference>
<dbReference type="GO" id="GO:0046332">
    <property type="term" value="F:SMAD binding"/>
    <property type="evidence" value="ECO:0007669"/>
    <property type="project" value="Ensembl"/>
</dbReference>
<dbReference type="GO" id="GO:0000976">
    <property type="term" value="F:transcription cis-regulatory region binding"/>
    <property type="evidence" value="ECO:0000266"/>
    <property type="project" value="MGI"/>
</dbReference>
<dbReference type="GO" id="GO:0008270">
    <property type="term" value="F:zinc ion binding"/>
    <property type="evidence" value="ECO:0007669"/>
    <property type="project" value="UniProtKB-KW"/>
</dbReference>
<dbReference type="GO" id="GO:0009952">
    <property type="term" value="P:anterior/posterior pattern specification"/>
    <property type="evidence" value="ECO:0000315"/>
    <property type="project" value="MGI"/>
</dbReference>
<dbReference type="GO" id="GO:0030183">
    <property type="term" value="P:B cell differentiation"/>
    <property type="evidence" value="ECO:0000315"/>
    <property type="project" value="MGI"/>
</dbReference>
<dbReference type="GO" id="GO:0048593">
    <property type="term" value="P:camera-type eye morphogenesis"/>
    <property type="evidence" value="ECO:0000316"/>
    <property type="project" value="MGI"/>
</dbReference>
<dbReference type="GO" id="GO:0071347">
    <property type="term" value="P:cellular response to interleukin-1"/>
    <property type="evidence" value="ECO:0007669"/>
    <property type="project" value="Ensembl"/>
</dbReference>
<dbReference type="GO" id="GO:0034644">
    <property type="term" value="P:cellular response to UV"/>
    <property type="evidence" value="ECO:0007669"/>
    <property type="project" value="Ensembl"/>
</dbReference>
<dbReference type="GO" id="GO:0006338">
    <property type="term" value="P:chromatin remodeling"/>
    <property type="evidence" value="ECO:0000266"/>
    <property type="project" value="ComplexPortal"/>
</dbReference>
<dbReference type="GO" id="GO:0051276">
    <property type="term" value="P:chromosome organization"/>
    <property type="evidence" value="ECO:0000315"/>
    <property type="project" value="UniProtKB"/>
</dbReference>
<dbReference type="GO" id="GO:0006974">
    <property type="term" value="P:DNA damage response"/>
    <property type="evidence" value="ECO:0000315"/>
    <property type="project" value="UniProtKB"/>
</dbReference>
<dbReference type="GO" id="GO:0000724">
    <property type="term" value="P:double-strand break repair via homologous recombination"/>
    <property type="evidence" value="ECO:0007669"/>
    <property type="project" value="Ensembl"/>
</dbReference>
<dbReference type="GO" id="GO:0010467">
    <property type="term" value="P:gene expression"/>
    <property type="evidence" value="ECO:0000314"/>
    <property type="project" value="MGI"/>
</dbReference>
<dbReference type="GO" id="GO:0030097">
    <property type="term" value="P:hemopoiesis"/>
    <property type="evidence" value="ECO:0000315"/>
    <property type="project" value="MGI"/>
</dbReference>
<dbReference type="GO" id="GO:0071707">
    <property type="term" value="P:immunoglobulin heavy chain V-D-J recombination"/>
    <property type="evidence" value="ECO:0000315"/>
    <property type="project" value="MGI"/>
</dbReference>
<dbReference type="GO" id="GO:0061052">
    <property type="term" value="P:negative regulation of cell growth involved in cardiac muscle cell development"/>
    <property type="evidence" value="ECO:0007669"/>
    <property type="project" value="Ensembl"/>
</dbReference>
<dbReference type="GO" id="GO:0032688">
    <property type="term" value="P:negative regulation of interferon-beta production"/>
    <property type="evidence" value="ECO:0007669"/>
    <property type="project" value="Ensembl"/>
</dbReference>
<dbReference type="GO" id="GO:1902894">
    <property type="term" value="P:negative regulation of miRNA transcription"/>
    <property type="evidence" value="ECO:0000314"/>
    <property type="project" value="BHF-UCL"/>
</dbReference>
<dbReference type="GO" id="GO:0000122">
    <property type="term" value="P:negative regulation of transcription by RNA polymerase II"/>
    <property type="evidence" value="ECO:0000314"/>
    <property type="project" value="BHF-UCL"/>
</dbReference>
<dbReference type="GO" id="GO:0045739">
    <property type="term" value="P:positive regulation of DNA repair"/>
    <property type="evidence" value="ECO:0000314"/>
    <property type="project" value="ComplexPortal"/>
</dbReference>
<dbReference type="GO" id="GO:0045893">
    <property type="term" value="P:positive regulation of DNA-templated transcription"/>
    <property type="evidence" value="ECO:0000266"/>
    <property type="project" value="ComplexPortal"/>
</dbReference>
<dbReference type="GO" id="GO:0010628">
    <property type="term" value="P:positive regulation of gene expression"/>
    <property type="evidence" value="ECO:0000314"/>
    <property type="project" value="MGI"/>
</dbReference>
<dbReference type="GO" id="GO:1904507">
    <property type="term" value="P:positive regulation of telomere maintenance in response to DNA damage"/>
    <property type="evidence" value="ECO:0000315"/>
    <property type="project" value="ComplexPortal"/>
</dbReference>
<dbReference type="GO" id="GO:0051726">
    <property type="term" value="P:regulation of cell cycle"/>
    <property type="evidence" value="ECO:0000266"/>
    <property type="project" value="ComplexPortal"/>
</dbReference>
<dbReference type="GO" id="GO:0033044">
    <property type="term" value="P:regulation of chromosome organization"/>
    <property type="evidence" value="ECO:0000266"/>
    <property type="project" value="ComplexPortal"/>
</dbReference>
<dbReference type="GO" id="GO:0006282">
    <property type="term" value="P:regulation of DNA repair"/>
    <property type="evidence" value="ECO:0000314"/>
    <property type="project" value="ComplexPortal"/>
</dbReference>
<dbReference type="GO" id="GO:0006275">
    <property type="term" value="P:regulation of DNA replication"/>
    <property type="evidence" value="ECO:0000266"/>
    <property type="project" value="ComplexPortal"/>
</dbReference>
<dbReference type="GO" id="GO:0060382">
    <property type="term" value="P:regulation of DNA strand elongation"/>
    <property type="evidence" value="ECO:0000266"/>
    <property type="project" value="ComplexPortal"/>
</dbReference>
<dbReference type="GO" id="GO:0006355">
    <property type="term" value="P:regulation of DNA-templated transcription"/>
    <property type="evidence" value="ECO:0000314"/>
    <property type="project" value="MGI"/>
</dbReference>
<dbReference type="GO" id="GO:0045995">
    <property type="term" value="P:regulation of embryonic development"/>
    <property type="evidence" value="ECO:0000315"/>
    <property type="project" value="ComplexPortal"/>
</dbReference>
<dbReference type="GO" id="GO:0034696">
    <property type="term" value="P:response to prostaglandin F"/>
    <property type="evidence" value="ECO:0007669"/>
    <property type="project" value="Ensembl"/>
</dbReference>
<dbReference type="GO" id="GO:0010225">
    <property type="term" value="P:response to UV-C"/>
    <property type="evidence" value="ECO:0000315"/>
    <property type="project" value="UniProtKB"/>
</dbReference>
<dbReference type="GO" id="GO:0006403">
    <property type="term" value="P:RNA localization"/>
    <property type="evidence" value="ECO:0000315"/>
    <property type="project" value="MGI"/>
</dbReference>
<dbReference type="GO" id="GO:0007283">
    <property type="term" value="P:spermatogenesis"/>
    <property type="evidence" value="ECO:0000315"/>
    <property type="project" value="UniProtKB"/>
</dbReference>
<dbReference type="GO" id="GO:0000723">
    <property type="term" value="P:telomere maintenance"/>
    <property type="evidence" value="ECO:0000315"/>
    <property type="project" value="ComplexPortal"/>
</dbReference>
<dbReference type="FunFam" id="3.30.160.60:FF:000104">
    <property type="entry name" value="Transcriptional repressor protein YY1"/>
    <property type="match status" value="1"/>
</dbReference>
<dbReference type="FunFam" id="3.30.160.60:FF:000109">
    <property type="entry name" value="Transcriptional repressor protein YY1"/>
    <property type="match status" value="1"/>
</dbReference>
<dbReference type="FunFam" id="3.30.160.60:FF:000174">
    <property type="entry name" value="Transcriptional repressor protein YY1"/>
    <property type="match status" value="1"/>
</dbReference>
<dbReference type="FunFam" id="3.30.160.60:FF:000163">
    <property type="entry name" value="transcriptional repressor protein YY1"/>
    <property type="match status" value="1"/>
</dbReference>
<dbReference type="Gene3D" id="3.30.160.60">
    <property type="entry name" value="Classic Zinc Finger"/>
    <property type="match status" value="4"/>
</dbReference>
<dbReference type="InterPro" id="IPR017114">
    <property type="entry name" value="YY1-like"/>
</dbReference>
<dbReference type="InterPro" id="IPR036236">
    <property type="entry name" value="Znf_C2H2_sf"/>
</dbReference>
<dbReference type="InterPro" id="IPR013087">
    <property type="entry name" value="Znf_C2H2_type"/>
</dbReference>
<dbReference type="PANTHER" id="PTHR14003">
    <property type="entry name" value="TRANSCRIPTIONAL REPRESSOR PROTEIN YY"/>
    <property type="match status" value="1"/>
</dbReference>
<dbReference type="PANTHER" id="PTHR14003:SF10">
    <property type="entry name" value="TRANSCRIPTIONAL REPRESSOR PROTEIN YY1"/>
    <property type="match status" value="1"/>
</dbReference>
<dbReference type="Pfam" id="PF00096">
    <property type="entry name" value="zf-C2H2"/>
    <property type="match status" value="4"/>
</dbReference>
<dbReference type="PIRSF" id="PIRSF037113">
    <property type="entry name" value="TF_Yin_yang"/>
    <property type="match status" value="1"/>
</dbReference>
<dbReference type="SMART" id="SM00355">
    <property type="entry name" value="ZnF_C2H2"/>
    <property type="match status" value="4"/>
</dbReference>
<dbReference type="SUPFAM" id="SSF57667">
    <property type="entry name" value="beta-beta-alpha zinc fingers"/>
    <property type="match status" value="3"/>
</dbReference>
<dbReference type="PROSITE" id="PS00028">
    <property type="entry name" value="ZINC_FINGER_C2H2_1"/>
    <property type="match status" value="4"/>
</dbReference>
<dbReference type="PROSITE" id="PS50157">
    <property type="entry name" value="ZINC_FINGER_C2H2_2"/>
    <property type="match status" value="4"/>
</dbReference>
<keyword id="KW-0010">Activator</keyword>
<keyword id="KW-0013">ADP-ribosylation</keyword>
<keyword id="KW-0963">Cytoplasm</keyword>
<keyword id="KW-0221">Differentiation</keyword>
<keyword id="KW-0227">DNA damage</keyword>
<keyword id="KW-0233">DNA recombination</keyword>
<keyword id="KW-0234">DNA repair</keyword>
<keyword id="KW-0238">DNA-binding</keyword>
<keyword id="KW-1017">Isopeptide bond</keyword>
<keyword id="KW-0479">Metal-binding</keyword>
<keyword id="KW-0539">Nucleus</keyword>
<keyword id="KW-0597">Phosphoprotein</keyword>
<keyword id="KW-1185">Reference proteome</keyword>
<keyword id="KW-0677">Repeat</keyword>
<keyword id="KW-0678">Repressor</keyword>
<keyword id="KW-0744">Spermatogenesis</keyword>
<keyword id="KW-0804">Transcription</keyword>
<keyword id="KW-0805">Transcription regulation</keyword>
<keyword id="KW-0832">Ubl conjugation</keyword>
<keyword id="KW-0862">Zinc</keyword>
<keyword id="KW-0863">Zinc-finger</keyword>
<comment type="function">
    <text evidence="2 5 7 8">Multifunctional transcription factor that exhibits positive and negative control on a large number of cellular and viral genes by binding to sites overlapping the transcription start site. Binds to the consensus sequence 5'-CCGCCATNTT-3'; some genes have been shown to contain a longer binding motif allowing enhanced binding; the initial CG dinucleotide can be methylated greatly reducing the binding affinity. The effect on transcription regulation is depending upon the context in which it binds and diverse mechanisms of action include direct activation or repression, indirect activation or repression via cofactor recruitment, or activation or repression by disruption of binding sites or conformational DNA changes. Its activity is regulated by transcription factors and cytoplasmic proteins that have been shown to abrogate or completely inhibit YY1-mediated activation or repression. Binds to the upstream conserved region (UCR) (5'-CGCCATTTT-3') of Moloney murine leukemia virus (MuLV). Acts synergistically with the SMAD1 and SMAD4 in bone morphogenetic protein (BMP)-mediated cardiac-specific gene expression (PubMed:15329343). Binds to SMAD binding elements (SBEs) (5'-GTCT/AGAC-3') within BMP response element (BMPRE) of cardiac activating regions (PubMed:15329343). Proposed to recruit the PRC2/EED-EZH2 complex to target genes that are transcriptional repressed. Involved in DNA repair. In vitro, binds to DNA recombination intermediate structures (Holliday junctions). Involved in spermatogenesis and may play a role in meiotic DNA double-strand break repair. Plays a role in regulating enhancer activation (By similarity). Recruits the PR-DUB complex to specific gene-regulatory regions (By similarity).</text>
</comment>
<comment type="function">
    <text evidence="1">Proposed core component of the chromatin remodeling INO80 complex which is involved in transcriptional regulation, DNA replication and probably DNA repair; proposed to target the INO80 complex to YY1-responsive elements.</text>
</comment>
<comment type="subunit">
    <text evidence="1 2 5 6 9">Interacts with YAF2 through the region encompassing the first and second zinc fingers. Component of the chromatin remodeling INO80 complex; specifically part of a complex module associated with the DBINO domain of INO80. Interacts with EED and EZH2; the interactions are indicative for an association with the PRC2/EED-EZH2 complex (By similarity). Found in a complex with SMAD1 and SMAD4 (PubMed:15329343). Interacts with SFMBT2 (PubMed:18024232). Found in a complex with YY1, SIN3A and HDAC1 (PubMed:21454521). Accessory component of the polycomb repressive deubiquitinase (PR-DUB) complex, at least composed of BAP1, one of ASXL1, ASXL2 or (probably) ASXL3 and one of MBD5 or MBD6; the PR-DUB core associates with a number of accessory proteins, including FOXK1, FOXK2, KDM1B, HCFC1, YY1 and OGT (By similarity). Interacts (via Gly-rich region) with HCFC1; the interaction is direct (By similarity). Interacts (via C-terminal zinc-finger domains) with BAP1 (via ULD domain); the interaction is direct and requires HCFC1 (By similarity).</text>
</comment>
<comment type="interaction">
    <interactant intactId="EBI-6921536">
        <id>Q00899</id>
    </interactant>
    <interactant intactId="EBI-1571628">
        <id>Q9JLN9</id>
        <label>Mtor</label>
    </interactant>
    <organismsDiffer>false</organismsDiffer>
    <experiments>4</experiments>
</comment>
<comment type="interaction">
    <interactant intactId="EBI-6921536">
        <id>Q00899</id>
    </interactant>
    <interactant intactId="EBI-1371053">
        <id>O70343</id>
        <label>Ppargc1a</label>
    </interactant>
    <organismsDiffer>false</organismsDiffer>
    <experiments>5</experiments>
</comment>
<comment type="interaction">
    <interactant intactId="EBI-6921536">
        <id>Q00899</id>
    </interactant>
    <interactant intactId="EBI-4567273">
        <id>Q8K4Q0</id>
        <label>Rptor</label>
    </interactant>
    <organismsDiffer>false</organismsDiffer>
    <experiments>3</experiments>
</comment>
<comment type="interaction">
    <interactant intactId="EBI-6921536">
        <id>Q00899</id>
    </interactant>
    <interactant intactId="EBI-6921575">
        <id>Q8CG47</id>
        <label>Smc4</label>
    </interactant>
    <organismsDiffer>false</organismsDiffer>
    <experiments>2</experiments>
</comment>
<comment type="interaction">
    <interactant intactId="EBI-6921536">
        <id>Q00899</id>
    </interactant>
    <interactant intactId="EBI-2313612">
        <id>P48432</id>
        <label>Sox2</label>
    </interactant>
    <organismsDiffer>false</organismsDiffer>
    <experiments>2</experiments>
</comment>
<comment type="subcellular location">
    <subcellularLocation>
        <location evidence="9">Nucleus</location>
    </subcellularLocation>
    <subcellularLocation>
        <location evidence="8">Nucleus matrix</location>
    </subcellularLocation>
    <subcellularLocation>
        <location evidence="9">Cytoplasm</location>
    </subcellularLocation>
    <text evidence="8">Associated with the nuclear matrix. In testis, localized to heterochromatin of spermatocytes.</text>
</comment>
<comment type="tissue specificity">
    <text evidence="6">Expressed in ovary and, at lower levels, in testis.</text>
</comment>
<comment type="developmental stage">
    <text evidence="6">At 7.5 dpc, highly expressed in the ectoplacental cone and, at lower levels, in the embryonic and extraembryonic ectoderm. At 14.5 dpc, highly expressed in placenta and yolk sac, and, at lower levels, in brain and heart.</text>
</comment>
<comment type="PTM">
    <text evidence="2">Transiently poly-ADP-ribosylated by PARP1 upon DNA damage, with the effect of decreasing affinity of YY1 to its cognate DNA binding sites.</text>
</comment>
<comment type="PTM">
    <text evidence="2">Ubiquitinated.</text>
</comment>
<comment type="PTM">
    <text evidence="2">Phosphorylation at Ser-120 by CK2 prevents proteolytic cleavage by caspase-7 (CASP7) during apoptosis.</text>
</comment>
<comment type="PTM">
    <text evidence="2">Proteolytically cleaved by caspase-7 (CASP7) in response to apoptosis. Phosphorylation at Ser-120 protects against proteolytic cleavage.</text>
</comment>
<comment type="disruption phenotype">
    <text evidence="8">Spermatocytes have a significant decrease in the global level of the heterochromatin markers and increase in the chromosomal double-strand break (DSB) signals at the leptotene/zygotene stages.</text>
</comment>
<comment type="similarity">
    <text evidence="10">Belongs to the YY transcription factor family.</text>
</comment>
<organism>
    <name type="scientific">Mus musculus</name>
    <name type="common">Mouse</name>
    <dbReference type="NCBI Taxonomy" id="10090"/>
    <lineage>
        <taxon>Eukaryota</taxon>
        <taxon>Metazoa</taxon>
        <taxon>Chordata</taxon>
        <taxon>Craniata</taxon>
        <taxon>Vertebrata</taxon>
        <taxon>Euteleostomi</taxon>
        <taxon>Mammalia</taxon>
        <taxon>Eutheria</taxon>
        <taxon>Euarchontoglires</taxon>
        <taxon>Glires</taxon>
        <taxon>Rodentia</taxon>
        <taxon>Myomorpha</taxon>
        <taxon>Muroidea</taxon>
        <taxon>Muridae</taxon>
        <taxon>Murinae</taxon>
        <taxon>Mus</taxon>
        <taxon>Mus</taxon>
    </lineage>
</organism>
<gene>
    <name type="primary">Yy1</name>
    <name type="synonym">Ucrbp</name>
</gene>
<proteinExistence type="evidence at protein level"/>
<sequence length="414" mass="44717">MASGDTLYIATDGSEMPAEIVELHEIEVETIPVETIETTVVGEEEEEDDDDEDGGGGDHGGGGGGHGHAGHHHHHHHHHHHHPPMIALQPLVTDDPTQVHHHQEVILVQTREEVVGGDDSDGLRAEDGFEDQILIPVPAPAGGDDDYIEQTLVTVAAAGKSGGGASSGGGRVKKGGGKKSGKKSYLGGGAGAAGGGGADPGNKKWEQKQVQIKTLEGEFSVTMWSSDEKKDIDHETVVEEQIIGENSPPDYSEYMTGKKLPPGGIPGIDLSDPKQLAEFARMKPRKIKEDDAPRTIACPHKGCTKMFRDNSAMRKHLHTHGPRVHVCAECGKAFVESSKLKRHQLVHTGEKPFQCTFEGCGKRFSLDFNLRTHVRIHTGDRPYVCPFDGCNKKFAQSTNLKSHILTHAKAKNNQ</sequence>
<reference key="1">
    <citation type="journal article" date="1992" name="Mol. Cell. Biol.">
        <title>Cloning of a negative transcription factor that binds to the upstream conserved region of Moloney murine leukemia virus.</title>
        <authorList>
            <person name="Flanagan J.R."/>
            <person name="Becker K.G."/>
            <person name="Ennist D.L."/>
            <person name="Gleason S.L."/>
            <person name="Driggers P.H."/>
            <person name="Levi B.-Z."/>
            <person name="Appella E."/>
            <person name="Ozato K."/>
        </authorList>
    </citation>
    <scope>NUCLEOTIDE SEQUENCE [MRNA]</scope>
</reference>
<reference key="2">
    <citation type="journal article" date="1993" name="Proc. Natl. Acad. Sci. U.S.A.">
        <title>Characterization of the mouse gene that encodes the delta/YY1/NF-E1/UCRBP transcription factor.</title>
        <authorList>
            <person name="Safrany G."/>
            <person name="Perry R.P."/>
        </authorList>
    </citation>
    <scope>NUCLEOTIDE SEQUENCE [GENOMIC DNA]</scope>
    <source>
        <tissue>Liver</tissue>
    </source>
</reference>
<reference key="3">
    <citation type="journal article" date="1991" name="Proc. Natl. Acad. Sci. U.S.A.">
        <title>Delta, a transcription factor that binds to downstream elements in several polymerase II promoters, is a functionally versatile zinc finger protein.</title>
        <authorList>
            <person name="Hariharan N."/>
            <person name="Kelley D.E."/>
            <person name="Perry R.P."/>
        </authorList>
    </citation>
    <scope>NUCLEOTIDE SEQUENCE [MRNA]</scope>
</reference>
<reference key="4">
    <citation type="journal article" date="2004" name="Genome Res.">
        <title>The status, quality, and expansion of the NIH full-length cDNA project: the Mammalian Gene Collection (MGC).</title>
        <authorList>
            <consortium name="The MGC Project Team"/>
        </authorList>
    </citation>
    <scope>NUCLEOTIDE SEQUENCE [LARGE SCALE MRNA]</scope>
    <source>
        <strain>FVB/N</strain>
        <tissue>Mammary gland</tissue>
    </source>
</reference>
<reference key="5">
    <citation type="journal article" date="2004" name="Development">
        <title>SMAD-mediated modulation of YY1 activity regulates the BMP response and cardiac-specific expression of a GATA4/5/6-dependent chick Nkx2.5 enhancer.</title>
        <authorList>
            <person name="Lee K.H."/>
            <person name="Evans S."/>
            <person name="Ruan T.Y."/>
            <person name="Lassar A.B."/>
        </authorList>
    </citation>
    <scope>FUNCTION</scope>
    <scope>DNA-BINDING</scope>
    <scope>IDENTIFICATION IN A COMPLEX WITH SMAD1 AND SMAD4</scope>
</reference>
<reference key="6">
    <citation type="journal article" date="2007" name="Nat. Struct. Mol. Biol.">
        <title>A YY1-INO80 complex regulates genomic stability through homologous recombination-based repair.</title>
        <authorList>
            <person name="Wu S."/>
            <person name="Shi Y."/>
            <person name="Mulligan P."/>
            <person name="Gay F."/>
            <person name="Landry J."/>
            <person name="Liu H."/>
            <person name="Lu J."/>
            <person name="Qi H.H."/>
            <person name="Wang W."/>
            <person name="Nickoloff J.A."/>
            <person name="Wu C."/>
            <person name="Shi Y."/>
        </authorList>
    </citation>
    <scope>FUNCTION IN DNA REPAIR</scope>
</reference>
<reference key="7">
    <citation type="journal article" date="2008" name="Gene Expr. Patterns">
        <title>The PcG gene Sfmbt2 is paternally expressed in extraembryonic tissues.</title>
        <authorList>
            <person name="Kuzmin A."/>
            <person name="Han Z."/>
            <person name="Golding M.C."/>
            <person name="Mann M.R."/>
            <person name="Latham K.E."/>
            <person name="Varmuza S."/>
        </authorList>
    </citation>
    <scope>INTERACTION WITH SFMBT2</scope>
    <scope>TISSUE SPECIFICITY</scope>
    <scope>DEVELOPMENTAL STAGE</scope>
</reference>
<reference key="8">
    <citation type="journal article" date="2009" name="Mol. Cell. Biol.">
        <title>Loss of YY1 impacts the heterochromatic state and meiotic double-strand breaks during mouse spermatogenesis.</title>
        <authorList>
            <person name="Wu S."/>
            <person name="Hu Y.C."/>
            <person name="Liu H."/>
            <person name="Shi Y."/>
        </authorList>
    </citation>
    <scope>FUNCTION IN SPERMATOGENESIS</scope>
    <scope>SUBCELLULAR LOCATION</scope>
    <scope>DISRUPTION PHENOTYPE</scope>
</reference>
<reference key="9">
    <citation type="journal article" date="2010" name="Cell">
        <title>A tissue-specific atlas of mouse protein phosphorylation and expression.</title>
        <authorList>
            <person name="Huttlin E.L."/>
            <person name="Jedrychowski M.P."/>
            <person name="Elias J.E."/>
            <person name="Goswami T."/>
            <person name="Rad R."/>
            <person name="Beausoleil S.A."/>
            <person name="Villen J."/>
            <person name="Haas W."/>
            <person name="Sowa M.E."/>
            <person name="Gygi S.P."/>
        </authorList>
    </citation>
    <scope>PHOSPHORYLATION [LARGE SCALE ANALYSIS] AT SER-247</scope>
    <scope>IDENTIFICATION BY MASS SPECTROMETRY [LARGE SCALE ANALYSIS]</scope>
    <source>
        <tissue>Kidney</tissue>
        <tissue>Spleen</tissue>
    </source>
</reference>
<reference key="10">
    <citation type="journal article" date="2011" name="J. Biol. Chem.">
        <title>The developmental regulator protein Gon4l associates with protein YY1, co-repressor Sin3a, and histone deacetylase 1 and mediates transcriptional repression.</title>
        <authorList>
            <person name="Lu P."/>
            <person name="Hankel I.L."/>
            <person name="Hostager B.S."/>
            <person name="Swartzendruber J.A."/>
            <person name="Friedman A.D."/>
            <person name="Brenton J.L."/>
            <person name="Rothman P.B."/>
            <person name="Colgan J.D."/>
        </authorList>
    </citation>
    <scope>IDENTIFICATION IN A COMPLEX WITH GON4L; SIN3A AND HDAC1</scope>
    <scope>SUBCELLULAR LOCATION</scope>
</reference>
<feature type="chain" id="PRO_0000047191" description="Transcriptional repressor protein YY1">
    <location>
        <begin position="1"/>
        <end position="414"/>
    </location>
</feature>
<feature type="zinc finger region" description="C2H2-type 1" evidence="3">
    <location>
        <begin position="296"/>
        <end position="320"/>
    </location>
</feature>
<feature type="zinc finger region" description="C2H2-type 2" evidence="3">
    <location>
        <begin position="325"/>
        <end position="347"/>
    </location>
</feature>
<feature type="zinc finger region" description="C2H2-type 3" evidence="3">
    <location>
        <begin position="353"/>
        <end position="377"/>
    </location>
</feature>
<feature type="zinc finger region" description="C2H2-type 4" evidence="3">
    <location>
        <begin position="383"/>
        <end position="407"/>
    </location>
</feature>
<feature type="region of interest" description="Interaction with the SMAD1/SMAD4 complex" evidence="2">
    <location>
        <begin position="1"/>
        <end position="170"/>
    </location>
</feature>
<feature type="region of interest" description="Disordered" evidence="4">
    <location>
        <begin position="32"/>
        <end position="83"/>
    </location>
</feature>
<feature type="region of interest" description="Gly-rich region involved in interaction with HCFC1" evidence="2">
    <location>
        <begin position="118"/>
        <end position="260"/>
    </location>
</feature>
<feature type="region of interest" description="Disordered" evidence="4">
    <location>
        <begin position="159"/>
        <end position="203"/>
    </location>
</feature>
<feature type="region of interest" description="Involved in nuclear matrix association" evidence="2">
    <location>
        <begin position="257"/>
        <end position="341"/>
    </location>
</feature>
<feature type="region of interest" description="Binding to DNA" evidence="2">
    <location>
        <begin position="295"/>
        <end position="414"/>
    </location>
</feature>
<feature type="region of interest" description="Involved in repression of activated transcription" evidence="2">
    <location>
        <begin position="333"/>
        <end position="371"/>
    </location>
</feature>
<feature type="region of interest" description="Involved in masking transactivation domain" evidence="2">
    <location>
        <begin position="371"/>
        <end position="397"/>
    </location>
</feature>
<feature type="compositionally biased region" description="Low complexity" evidence="4">
    <location>
        <begin position="32"/>
        <end position="41"/>
    </location>
</feature>
<feature type="compositionally biased region" description="Acidic residues" evidence="4">
    <location>
        <begin position="42"/>
        <end position="55"/>
    </location>
</feature>
<feature type="compositionally biased region" description="Gly residues" evidence="4">
    <location>
        <begin position="57"/>
        <end position="67"/>
    </location>
</feature>
<feature type="compositionally biased region" description="Basic residues" evidence="4">
    <location>
        <begin position="68"/>
        <end position="83"/>
    </location>
</feature>
<feature type="compositionally biased region" description="Gly residues" evidence="4">
    <location>
        <begin position="160"/>
        <end position="170"/>
    </location>
</feature>
<feature type="compositionally biased region" description="Basic residues" evidence="4">
    <location>
        <begin position="171"/>
        <end position="182"/>
    </location>
</feature>
<feature type="compositionally biased region" description="Gly residues" evidence="4">
    <location>
        <begin position="186"/>
        <end position="199"/>
    </location>
</feature>
<feature type="binding site" evidence="2">
    <location>
        <position position="298"/>
    </location>
    <ligand>
        <name>Zn(2+)</name>
        <dbReference type="ChEBI" id="CHEBI:29105"/>
        <label>1</label>
    </ligand>
</feature>
<feature type="binding site" evidence="2">
    <location>
        <position position="303"/>
    </location>
    <ligand>
        <name>Zn(2+)</name>
        <dbReference type="ChEBI" id="CHEBI:29105"/>
        <label>1</label>
    </ligand>
</feature>
<feature type="binding site" evidence="2">
    <location>
        <position position="316"/>
    </location>
    <ligand>
        <name>Zn(2+)</name>
        <dbReference type="ChEBI" id="CHEBI:29105"/>
        <label>1</label>
    </ligand>
</feature>
<feature type="binding site" evidence="2">
    <location>
        <position position="320"/>
    </location>
    <ligand>
        <name>Zn(2+)</name>
        <dbReference type="ChEBI" id="CHEBI:29105"/>
        <label>1</label>
    </ligand>
</feature>
<feature type="binding site" evidence="2">
    <location>
        <position position="327"/>
    </location>
    <ligand>
        <name>Zn(2+)</name>
        <dbReference type="ChEBI" id="CHEBI:29105"/>
        <label>2</label>
    </ligand>
</feature>
<feature type="binding site" evidence="2">
    <location>
        <position position="330"/>
    </location>
    <ligand>
        <name>Zn(2+)</name>
        <dbReference type="ChEBI" id="CHEBI:29105"/>
        <label>2</label>
    </ligand>
</feature>
<feature type="binding site" evidence="2">
    <location>
        <position position="343"/>
    </location>
    <ligand>
        <name>Zn(2+)</name>
        <dbReference type="ChEBI" id="CHEBI:29105"/>
        <label>2</label>
    </ligand>
</feature>
<feature type="binding site" evidence="2">
    <location>
        <position position="347"/>
    </location>
    <ligand>
        <name>Zn(2+)</name>
        <dbReference type="ChEBI" id="CHEBI:29105"/>
        <label>2</label>
    </ligand>
</feature>
<feature type="binding site" evidence="2">
    <location>
        <position position="355"/>
    </location>
    <ligand>
        <name>Zn(2+)</name>
        <dbReference type="ChEBI" id="CHEBI:29105"/>
        <label>3</label>
    </ligand>
</feature>
<feature type="binding site" evidence="2">
    <location>
        <position position="360"/>
    </location>
    <ligand>
        <name>Zn(2+)</name>
        <dbReference type="ChEBI" id="CHEBI:29105"/>
        <label>3</label>
    </ligand>
</feature>
<feature type="binding site" evidence="2">
    <location>
        <position position="373"/>
    </location>
    <ligand>
        <name>Zn(2+)</name>
        <dbReference type="ChEBI" id="CHEBI:29105"/>
        <label>3</label>
    </ligand>
</feature>
<feature type="binding site" evidence="2">
    <location>
        <position position="377"/>
    </location>
    <ligand>
        <name>Zn(2+)</name>
        <dbReference type="ChEBI" id="CHEBI:29105"/>
        <label>3</label>
    </ligand>
</feature>
<feature type="binding site" evidence="2">
    <location>
        <position position="385"/>
    </location>
    <ligand>
        <name>Zn(2+)</name>
        <dbReference type="ChEBI" id="CHEBI:29105"/>
        <label>4</label>
    </ligand>
</feature>
<feature type="binding site" evidence="2">
    <location>
        <position position="390"/>
    </location>
    <ligand>
        <name>Zn(2+)</name>
        <dbReference type="ChEBI" id="CHEBI:29105"/>
        <label>4</label>
    </ligand>
</feature>
<feature type="binding site" evidence="2">
    <location>
        <position position="403"/>
    </location>
    <ligand>
        <name>Zn(2+)</name>
        <dbReference type="ChEBI" id="CHEBI:29105"/>
        <label>4</label>
    </ligand>
</feature>
<feature type="binding site" evidence="2">
    <location>
        <position position="407"/>
    </location>
    <ligand>
        <name>Zn(2+)</name>
        <dbReference type="ChEBI" id="CHEBI:29105"/>
        <label>4</label>
    </ligand>
</feature>
<feature type="site" description="Cleavage; by caspase-7" evidence="2">
    <location>
        <begin position="121"/>
        <end position="122"/>
    </location>
</feature>
<feature type="modified residue" description="Phosphoserine" evidence="2">
    <location>
        <position position="120"/>
    </location>
</feature>
<feature type="modified residue" description="Phosphoserine" evidence="11">
    <location>
        <position position="247"/>
    </location>
</feature>
<feature type="modified residue" description="Phosphothreonine" evidence="2">
    <location>
        <position position="378"/>
    </location>
</feature>
<feature type="cross-link" description="Glycyl lysine isopeptide (Lys-Gly) (interchain with G-Cter in SUMO2)" evidence="2">
    <location>
        <position position="182"/>
    </location>
</feature>
<feature type="cross-link" description="Glycyl lysine isopeptide (Lys-Gly) (interchain with G-Cter in SUMO2)" evidence="2">
    <location>
        <position position="183"/>
    </location>
</feature>
<feature type="cross-link" description="Glycyl lysine isopeptide (Lys-Gly) (interchain with G-Cter in SUMO2)" evidence="2">
    <location>
        <position position="208"/>
    </location>
</feature>
<feature type="cross-link" description="Glycyl lysine isopeptide (Lys-Gly) (interchain with G-Cter in SUMO2)" evidence="2">
    <location>
        <position position="230"/>
    </location>
</feature>
<feature type="cross-link" description="Glycyl lysine isopeptide (Lys-Gly) (interchain with G-Cter in SUMO2)" evidence="2">
    <location>
        <position position="286"/>
    </location>
</feature>
<feature type="cross-link" description="Glycyl lysine isopeptide (Lys-Gly) (interchain with G-Cter in SUMO2)" evidence="2">
    <location>
        <position position="288"/>
    </location>
</feature>
<feature type="cross-link" description="Glycyl lysine isopeptide (Lys-Gly) (interchain with G-Cter in SUMO2)" evidence="2">
    <location>
        <position position="409"/>
    </location>
</feature>
<feature type="cross-link" description="Glycyl lysine isopeptide (Lys-Gly) (interchain with G-Cter in SUMO2)" evidence="2">
    <location>
        <position position="411"/>
    </location>
</feature>
<feature type="sequence conflict" description="In Ref. 3; AAA37521." evidence="10" ref="3">
    <original>F</original>
    <variation>S</variation>
    <location>
        <position position="219"/>
    </location>
</feature>
<feature type="sequence conflict" description="In Ref. 3; AAA37521." evidence="10" ref="3">
    <original>R</original>
    <variation>G</variation>
    <location>
        <position position="375"/>
    </location>
</feature>
<evidence type="ECO:0000250" key="1"/>
<evidence type="ECO:0000250" key="2">
    <source>
        <dbReference type="UniProtKB" id="P25490"/>
    </source>
</evidence>
<evidence type="ECO:0000255" key="3">
    <source>
        <dbReference type="PROSITE-ProRule" id="PRU00042"/>
    </source>
</evidence>
<evidence type="ECO:0000256" key="4">
    <source>
        <dbReference type="SAM" id="MobiDB-lite"/>
    </source>
</evidence>
<evidence type="ECO:0000269" key="5">
    <source>
    </source>
</evidence>
<evidence type="ECO:0000269" key="6">
    <source>
    </source>
</evidence>
<evidence type="ECO:0000269" key="7">
    <source>
    </source>
</evidence>
<evidence type="ECO:0000269" key="8">
    <source>
    </source>
</evidence>
<evidence type="ECO:0000269" key="9">
    <source>
    </source>
</evidence>
<evidence type="ECO:0000305" key="10"/>
<evidence type="ECO:0007744" key="11">
    <source>
    </source>
</evidence>